<keyword id="KW-0067">ATP-binding</keyword>
<keyword id="KW-0963">Cytoplasm</keyword>
<keyword id="KW-0227">DNA damage</keyword>
<keyword id="KW-0228">DNA excision</keyword>
<keyword id="KW-0234">DNA repair</keyword>
<keyword id="KW-0267">Excision nuclease</keyword>
<keyword id="KW-0347">Helicase</keyword>
<keyword id="KW-0378">Hydrolase</keyword>
<keyword id="KW-0547">Nucleotide-binding</keyword>
<keyword id="KW-1185">Reference proteome</keyword>
<keyword id="KW-0742">SOS response</keyword>
<feature type="chain" id="PRO_1000099558" description="UvrABC system protein B">
    <location>
        <begin position="1"/>
        <end position="679"/>
    </location>
</feature>
<feature type="domain" description="Helicase ATP-binding" evidence="1">
    <location>
        <begin position="25"/>
        <end position="176"/>
    </location>
</feature>
<feature type="domain" description="Helicase C-terminal" evidence="1">
    <location>
        <begin position="429"/>
        <end position="591"/>
    </location>
</feature>
<feature type="domain" description="UVR" evidence="1">
    <location>
        <begin position="639"/>
        <end position="674"/>
    </location>
</feature>
<feature type="short sequence motif" description="Beta-hairpin">
    <location>
        <begin position="91"/>
        <end position="114"/>
    </location>
</feature>
<feature type="binding site" evidence="1">
    <location>
        <begin position="38"/>
        <end position="45"/>
    </location>
    <ligand>
        <name>ATP</name>
        <dbReference type="ChEBI" id="CHEBI:30616"/>
    </ligand>
</feature>
<protein>
    <recommendedName>
        <fullName evidence="1">UvrABC system protein B</fullName>
        <shortName evidence="1">Protein UvrB</shortName>
    </recommendedName>
    <alternativeName>
        <fullName evidence="1">Excinuclease ABC subunit B</fullName>
    </alternativeName>
</protein>
<reference key="1">
    <citation type="journal article" date="2007" name="PLoS Genet.">
        <title>Patterns and implications of gene gain and loss in the evolution of Prochlorococcus.</title>
        <authorList>
            <person name="Kettler G.C."/>
            <person name="Martiny A.C."/>
            <person name="Huang K."/>
            <person name="Zucker J."/>
            <person name="Coleman M.L."/>
            <person name="Rodrigue S."/>
            <person name="Chen F."/>
            <person name="Lapidus A."/>
            <person name="Ferriera S."/>
            <person name="Johnson J."/>
            <person name="Steglich C."/>
            <person name="Church G.M."/>
            <person name="Richardson P."/>
            <person name="Chisholm S.W."/>
        </authorList>
    </citation>
    <scope>NUCLEOTIDE SEQUENCE [LARGE SCALE GENOMIC DNA]</scope>
    <source>
        <strain>MIT 9211</strain>
    </source>
</reference>
<dbReference type="EMBL" id="CP000878">
    <property type="protein sequence ID" value="ABX09706.1"/>
    <property type="molecule type" value="Genomic_DNA"/>
</dbReference>
<dbReference type="RefSeq" id="WP_012196326.1">
    <property type="nucleotide sequence ID" value="NC_009976.1"/>
</dbReference>
<dbReference type="SMR" id="A9BD93"/>
<dbReference type="STRING" id="93059.P9211_17751"/>
<dbReference type="KEGG" id="pmj:P9211_17751"/>
<dbReference type="eggNOG" id="COG0556">
    <property type="taxonomic scope" value="Bacteria"/>
</dbReference>
<dbReference type="HOGENOM" id="CLU_009621_2_1_3"/>
<dbReference type="OrthoDB" id="9806651at2"/>
<dbReference type="Proteomes" id="UP000000788">
    <property type="component" value="Chromosome"/>
</dbReference>
<dbReference type="GO" id="GO:0005737">
    <property type="term" value="C:cytoplasm"/>
    <property type="evidence" value="ECO:0007669"/>
    <property type="project" value="UniProtKB-SubCell"/>
</dbReference>
<dbReference type="GO" id="GO:0009380">
    <property type="term" value="C:excinuclease repair complex"/>
    <property type="evidence" value="ECO:0007669"/>
    <property type="project" value="InterPro"/>
</dbReference>
<dbReference type="GO" id="GO:0005524">
    <property type="term" value="F:ATP binding"/>
    <property type="evidence" value="ECO:0007669"/>
    <property type="project" value="UniProtKB-UniRule"/>
</dbReference>
<dbReference type="GO" id="GO:0016887">
    <property type="term" value="F:ATP hydrolysis activity"/>
    <property type="evidence" value="ECO:0007669"/>
    <property type="project" value="InterPro"/>
</dbReference>
<dbReference type="GO" id="GO:0003677">
    <property type="term" value="F:DNA binding"/>
    <property type="evidence" value="ECO:0007669"/>
    <property type="project" value="UniProtKB-UniRule"/>
</dbReference>
<dbReference type="GO" id="GO:0009381">
    <property type="term" value="F:excinuclease ABC activity"/>
    <property type="evidence" value="ECO:0007669"/>
    <property type="project" value="UniProtKB-UniRule"/>
</dbReference>
<dbReference type="GO" id="GO:0004386">
    <property type="term" value="F:helicase activity"/>
    <property type="evidence" value="ECO:0007669"/>
    <property type="project" value="UniProtKB-KW"/>
</dbReference>
<dbReference type="GO" id="GO:0006289">
    <property type="term" value="P:nucleotide-excision repair"/>
    <property type="evidence" value="ECO:0007669"/>
    <property type="project" value="UniProtKB-UniRule"/>
</dbReference>
<dbReference type="GO" id="GO:0009432">
    <property type="term" value="P:SOS response"/>
    <property type="evidence" value="ECO:0007669"/>
    <property type="project" value="UniProtKB-UniRule"/>
</dbReference>
<dbReference type="CDD" id="cd17916">
    <property type="entry name" value="DEXHc_UvrB"/>
    <property type="match status" value="1"/>
</dbReference>
<dbReference type="CDD" id="cd18790">
    <property type="entry name" value="SF2_C_UvrB"/>
    <property type="match status" value="1"/>
</dbReference>
<dbReference type="Gene3D" id="3.40.50.300">
    <property type="entry name" value="P-loop containing nucleotide triphosphate hydrolases"/>
    <property type="match status" value="3"/>
</dbReference>
<dbReference type="Gene3D" id="4.10.860.10">
    <property type="entry name" value="UVR domain"/>
    <property type="match status" value="1"/>
</dbReference>
<dbReference type="HAMAP" id="MF_00204">
    <property type="entry name" value="UvrB"/>
    <property type="match status" value="1"/>
</dbReference>
<dbReference type="InterPro" id="IPR006935">
    <property type="entry name" value="Helicase/UvrB_N"/>
</dbReference>
<dbReference type="InterPro" id="IPR014001">
    <property type="entry name" value="Helicase_ATP-bd"/>
</dbReference>
<dbReference type="InterPro" id="IPR001650">
    <property type="entry name" value="Helicase_C-like"/>
</dbReference>
<dbReference type="InterPro" id="IPR027417">
    <property type="entry name" value="P-loop_NTPase"/>
</dbReference>
<dbReference type="InterPro" id="IPR001943">
    <property type="entry name" value="UVR_dom"/>
</dbReference>
<dbReference type="InterPro" id="IPR036876">
    <property type="entry name" value="UVR_dom_sf"/>
</dbReference>
<dbReference type="InterPro" id="IPR004807">
    <property type="entry name" value="UvrB"/>
</dbReference>
<dbReference type="InterPro" id="IPR041471">
    <property type="entry name" value="UvrB_inter"/>
</dbReference>
<dbReference type="InterPro" id="IPR024759">
    <property type="entry name" value="UvrB_YAD/RRR_dom"/>
</dbReference>
<dbReference type="NCBIfam" id="NF003673">
    <property type="entry name" value="PRK05298.1"/>
    <property type="match status" value="1"/>
</dbReference>
<dbReference type="NCBIfam" id="TIGR00631">
    <property type="entry name" value="uvrb"/>
    <property type="match status" value="1"/>
</dbReference>
<dbReference type="PANTHER" id="PTHR24029">
    <property type="entry name" value="UVRABC SYSTEM PROTEIN B"/>
    <property type="match status" value="1"/>
</dbReference>
<dbReference type="PANTHER" id="PTHR24029:SF0">
    <property type="entry name" value="UVRABC SYSTEM PROTEIN B"/>
    <property type="match status" value="1"/>
</dbReference>
<dbReference type="Pfam" id="PF00271">
    <property type="entry name" value="Helicase_C"/>
    <property type="match status" value="1"/>
</dbReference>
<dbReference type="Pfam" id="PF04851">
    <property type="entry name" value="ResIII"/>
    <property type="match status" value="1"/>
</dbReference>
<dbReference type="Pfam" id="PF02151">
    <property type="entry name" value="UVR"/>
    <property type="match status" value="1"/>
</dbReference>
<dbReference type="Pfam" id="PF12344">
    <property type="entry name" value="UvrB"/>
    <property type="match status" value="1"/>
</dbReference>
<dbReference type="Pfam" id="PF17757">
    <property type="entry name" value="UvrB_inter"/>
    <property type="match status" value="1"/>
</dbReference>
<dbReference type="SMART" id="SM00487">
    <property type="entry name" value="DEXDc"/>
    <property type="match status" value="1"/>
</dbReference>
<dbReference type="SMART" id="SM00490">
    <property type="entry name" value="HELICc"/>
    <property type="match status" value="1"/>
</dbReference>
<dbReference type="SUPFAM" id="SSF46600">
    <property type="entry name" value="C-terminal UvrC-binding domain of UvrB"/>
    <property type="match status" value="1"/>
</dbReference>
<dbReference type="SUPFAM" id="SSF52540">
    <property type="entry name" value="P-loop containing nucleoside triphosphate hydrolases"/>
    <property type="match status" value="2"/>
</dbReference>
<dbReference type="PROSITE" id="PS51192">
    <property type="entry name" value="HELICASE_ATP_BIND_1"/>
    <property type="match status" value="1"/>
</dbReference>
<dbReference type="PROSITE" id="PS51194">
    <property type="entry name" value="HELICASE_CTER"/>
    <property type="match status" value="1"/>
</dbReference>
<dbReference type="PROSITE" id="PS50151">
    <property type="entry name" value="UVR"/>
    <property type="match status" value="1"/>
</dbReference>
<proteinExistence type="inferred from homology"/>
<comment type="function">
    <text evidence="1">The UvrABC repair system catalyzes the recognition and processing of DNA lesions. A damage recognition complex composed of 2 UvrA and 2 UvrB subunits scans DNA for abnormalities. Upon binding of the UvrA(2)B(2) complex to a putative damaged site, the DNA wraps around one UvrB monomer. DNA wrap is dependent on ATP binding by UvrB and probably causes local melting of the DNA helix, facilitating insertion of UvrB beta-hairpin between the DNA strands. Then UvrB probes one DNA strand for the presence of a lesion. If a lesion is found the UvrA subunits dissociate and the UvrB-DNA preincision complex is formed. This complex is subsequently bound by UvrC and the second UvrB is released. If no lesion is found, the DNA wraps around the other UvrB subunit that will check the other stand for damage.</text>
</comment>
<comment type="subunit">
    <text evidence="1">Forms a heterotetramer with UvrA during the search for lesions. Interacts with UvrC in an incision complex.</text>
</comment>
<comment type="subcellular location">
    <subcellularLocation>
        <location evidence="1">Cytoplasm</location>
    </subcellularLocation>
</comment>
<comment type="domain">
    <text evidence="1">The beta-hairpin motif is involved in DNA binding.</text>
</comment>
<comment type="similarity">
    <text evidence="1">Belongs to the UvrB family.</text>
</comment>
<evidence type="ECO:0000255" key="1">
    <source>
        <dbReference type="HAMAP-Rule" id="MF_00204"/>
    </source>
</evidence>
<organism>
    <name type="scientific">Prochlorococcus marinus (strain MIT 9211)</name>
    <dbReference type="NCBI Taxonomy" id="93059"/>
    <lineage>
        <taxon>Bacteria</taxon>
        <taxon>Bacillati</taxon>
        <taxon>Cyanobacteriota</taxon>
        <taxon>Cyanophyceae</taxon>
        <taxon>Synechococcales</taxon>
        <taxon>Prochlorococcaceae</taxon>
        <taxon>Prochlorococcus</taxon>
    </lineage>
</organism>
<name>UVRB_PROM4</name>
<gene>
    <name evidence="1" type="primary">uvrB</name>
    <name type="ordered locus">P9211_17751</name>
</gene>
<accession>A9BD93</accession>
<sequence>MHKYHLNSPYLPKGDQPKAISELVYGVNQGKQYQTLLGATGTGKTFTIANVIEQTGRPTLVLAHNKTLAAQLCNELREFFPKNAVEYFISYYDYYQPEAYVPVSDTYIAKTSSVNEEIDMLRHSATRSLFERRDVIVVASISCIYGLGIPSEYLKASVKFQLGNDINVRESLRELVSNQYVRNDVDISRGNFRIKGDVLEIGPAYEDRLVRIELFGDEVEAIRYVDPITGEILENLNSINIYPAKHFVTPKDRLLIAIQSIQKELKDQLDFFNQEGKLLEAQRLEQRTKYDIEMLKEVGYCNGVENYARHLSGRDQGTPPECLIDYFPEDWLLVVDESHVTCSQLQAMYNGDQSRKKVLIDHGFRLPSAADNRPLKSDEFWSKAKQTVFISATPGDWECEVSTDGIVEQVIRPTGVLDPVVEVRPTAGQIDDLLDEIRKRVIKKERVLITTLTKRMAEDLSDYLSENRVKVRYLHSEIHSIERIEIIQDLRVGEYDVLVGVNLLREGLDLPEVSLVVILDADKEGFLRAKRSLIQTIGRAARHVDGFALLYADNLTESMSTAIQETERRRAIQQAYNQKHGIIPKPAGKKPSNSILSFLELSRKLQNEGDNADLVSITSKAVDSLNQSEDLGIAFVELPEIIDKLEGKMNLAAEELDFEQAAKLRDRIRQLRKKLSKPE</sequence>